<protein>
    <recommendedName>
        <fullName evidence="2">CTP synthase</fullName>
        <ecNumber>6.3.4.2</ecNumber>
    </recommendedName>
    <alternativeName>
        <fullName evidence="4">CTP synthetase</fullName>
    </alternativeName>
    <alternativeName>
        <fullName evidence="4">UTP--ammonia ligase</fullName>
    </alternativeName>
</protein>
<accession>Q2M197</accession>
<accession>B5DQR1</accession>
<sequence length="644" mass="71513">MKYILVTGGVISGVGKGVIASSFGTLLKSCQLDVTSIKIDPYINIDAGTFSPYEHGEVYVLDDGAEVDLDLGNYERFLDITLHRDNNITTGKIYKLVIEKERTGEYLGKTVQVVPHITDAIQEWVERVAQTPVQGSSKPQVCIIELGGTIGDIEGMPFVEAFRQFQFRVKRENFCVAHVSLVPLPKATGEPKTKPTQSSVRELRGCGLSPDLIVCRSEKPIGLEVKEKISNFCHVGPDQVICIHDLNSIYHVPLLMEQNGVIEYLNERLQLNIDMSKRTKCLQHWRDLARRTETVRREVSIAIVGKYTKFADSYASVVKALQHAALAANRKLVLVFIESCQLEQETLVSEPSKYHKEWQRLCDSDGILVPGGFGSRGMEGKIRACRWARENQKPMLGICLGLQAAVIEFARNKLGLKDANTTEIDPQTGNALVIDMPEHHTGQLGGTMRLGKRTTVFSEGCTSIIRQLYGNPKSIEERHRHRYEVNPKYVPQLEEHGMRFVATDVDKTRMEIIELRDHPYFVATQYHPEYLSRPLKPSPPFLGLILASVDRLPQYIQRGCRLSPRQLSDASSDEEETYVGATKLMKSLQITGTTTPTNGISRNACRSSNSSTISTVSSDIEGACGGVGVGPTTTNGHGEDIGKE</sequence>
<reference key="1">
    <citation type="journal article" date="2005" name="Genome Res.">
        <title>Comparative genome sequencing of Drosophila pseudoobscura: chromosomal, gene, and cis-element evolution.</title>
        <authorList>
            <person name="Richards S."/>
            <person name="Liu Y."/>
            <person name="Bettencourt B.R."/>
            <person name="Hradecky P."/>
            <person name="Letovsky S."/>
            <person name="Nielsen R."/>
            <person name="Thornton K."/>
            <person name="Hubisz M.J."/>
            <person name="Chen R."/>
            <person name="Meisel R.P."/>
            <person name="Couronne O."/>
            <person name="Hua S."/>
            <person name="Smith M.A."/>
            <person name="Zhang P."/>
            <person name="Liu J."/>
            <person name="Bussemaker H.J."/>
            <person name="van Batenburg M.F."/>
            <person name="Howells S.L."/>
            <person name="Scherer S.E."/>
            <person name="Sodergren E."/>
            <person name="Matthews B.B."/>
            <person name="Crosby M.A."/>
            <person name="Schroeder A.J."/>
            <person name="Ortiz-Barrientos D."/>
            <person name="Rives C.M."/>
            <person name="Metzker M.L."/>
            <person name="Muzny D.M."/>
            <person name="Scott G."/>
            <person name="Steffen D."/>
            <person name="Wheeler D.A."/>
            <person name="Worley K.C."/>
            <person name="Havlak P."/>
            <person name="Durbin K.J."/>
            <person name="Egan A."/>
            <person name="Gill R."/>
            <person name="Hume J."/>
            <person name="Morgan M.B."/>
            <person name="Miner G."/>
            <person name="Hamilton C."/>
            <person name="Huang Y."/>
            <person name="Waldron L."/>
            <person name="Verduzco D."/>
            <person name="Clerc-Blankenburg K.P."/>
            <person name="Dubchak I."/>
            <person name="Noor M.A.F."/>
            <person name="Anderson W."/>
            <person name="White K.P."/>
            <person name="Clark A.G."/>
            <person name="Schaeffer S.W."/>
            <person name="Gelbart W.M."/>
            <person name="Weinstock G.M."/>
            <person name="Gibbs R.A."/>
        </authorList>
    </citation>
    <scope>NUCLEOTIDE SEQUENCE [LARGE SCALE GENOMIC DNA]</scope>
    <source>
        <strain>MV2-25 / Tucson 14011-0121.94</strain>
    </source>
</reference>
<name>PYRG_DROPS</name>
<feature type="chain" id="PRO_0000247039" description="CTP synthase">
    <location>
        <begin position="1"/>
        <end position="644"/>
    </location>
</feature>
<feature type="domain" description="Glutamine amidotransferase type-1" evidence="3">
    <location>
        <begin position="300"/>
        <end position="551"/>
    </location>
</feature>
<feature type="active site" description="For GATase activity" evidence="3">
    <location>
        <position position="399"/>
    </location>
</feature>
<feature type="active site" description="For GATase activity" evidence="3">
    <location>
        <position position="527"/>
    </location>
</feature>
<feature type="active site" description="For GATase activity" evidence="3">
    <location>
        <position position="529"/>
    </location>
</feature>
<proteinExistence type="inferred from homology"/>
<organism>
    <name type="scientific">Drosophila pseudoobscura pseudoobscura</name>
    <name type="common">Fruit fly</name>
    <dbReference type="NCBI Taxonomy" id="46245"/>
    <lineage>
        <taxon>Eukaryota</taxon>
        <taxon>Metazoa</taxon>
        <taxon>Ecdysozoa</taxon>
        <taxon>Arthropoda</taxon>
        <taxon>Hexapoda</taxon>
        <taxon>Insecta</taxon>
        <taxon>Pterygota</taxon>
        <taxon>Neoptera</taxon>
        <taxon>Endopterygota</taxon>
        <taxon>Diptera</taxon>
        <taxon>Brachycera</taxon>
        <taxon>Muscomorpha</taxon>
        <taxon>Ephydroidea</taxon>
        <taxon>Drosophilidae</taxon>
        <taxon>Drosophila</taxon>
        <taxon>Sophophora</taxon>
    </lineage>
</organism>
<gene>
    <name evidence="2" type="primary">Ctps</name>
    <name evidence="2" type="synonym">CTPsyn</name>
    <name type="ORF">GA23623</name>
</gene>
<keyword id="KW-0067">ATP-binding</keyword>
<keyword id="KW-0315">Glutamine amidotransferase</keyword>
<keyword id="KW-0436">Ligase</keyword>
<keyword id="KW-0547">Nucleotide-binding</keyword>
<keyword id="KW-0665">Pyrimidine biosynthesis</keyword>
<keyword id="KW-1185">Reference proteome</keyword>
<dbReference type="EC" id="6.3.4.2"/>
<dbReference type="EMBL" id="CH379069">
    <property type="protein sequence ID" value="EDY73377.1"/>
    <property type="molecule type" value="Genomic_DNA"/>
</dbReference>
<dbReference type="RefSeq" id="XP_015042586.1">
    <property type="nucleotide sequence ID" value="XM_015187100.1"/>
</dbReference>
<dbReference type="SMR" id="Q2M197"/>
<dbReference type="FunCoup" id="Q2M197">
    <property type="interactions" value="1115"/>
</dbReference>
<dbReference type="STRING" id="46245.Q2M197"/>
<dbReference type="EnsemblMetazoa" id="FBtr0375070">
    <property type="protein sequence ID" value="FBpp0336544"/>
    <property type="gene ID" value="FBgn0245023"/>
</dbReference>
<dbReference type="GeneID" id="6900355"/>
<dbReference type="KEGG" id="dpo:6900355"/>
<dbReference type="CTD" id="39645"/>
<dbReference type="eggNOG" id="KOG2387">
    <property type="taxonomic scope" value="Eukaryota"/>
</dbReference>
<dbReference type="InParanoid" id="Q2M197"/>
<dbReference type="UniPathway" id="UPA00159">
    <property type="reaction ID" value="UER00277"/>
</dbReference>
<dbReference type="Proteomes" id="UP000001819">
    <property type="component" value="Chromosome X"/>
</dbReference>
<dbReference type="Bgee" id="FBgn0245023">
    <property type="expression patterns" value="Expressed in female reproductive system and 2 other cell types or tissues"/>
</dbReference>
<dbReference type="ExpressionAtlas" id="Q2M197">
    <property type="expression patterns" value="baseline"/>
</dbReference>
<dbReference type="GO" id="GO:0097268">
    <property type="term" value="C:cytoophidium"/>
    <property type="evidence" value="ECO:0007669"/>
    <property type="project" value="TreeGrafter"/>
</dbReference>
<dbReference type="GO" id="GO:0005737">
    <property type="term" value="C:cytoplasm"/>
    <property type="evidence" value="ECO:0007669"/>
    <property type="project" value="TreeGrafter"/>
</dbReference>
<dbReference type="GO" id="GO:0005524">
    <property type="term" value="F:ATP binding"/>
    <property type="evidence" value="ECO:0007669"/>
    <property type="project" value="UniProtKB-KW"/>
</dbReference>
<dbReference type="GO" id="GO:0003883">
    <property type="term" value="F:CTP synthase activity"/>
    <property type="evidence" value="ECO:0007669"/>
    <property type="project" value="UniProtKB-EC"/>
</dbReference>
<dbReference type="GO" id="GO:0042802">
    <property type="term" value="F:identical protein binding"/>
    <property type="evidence" value="ECO:0007669"/>
    <property type="project" value="TreeGrafter"/>
</dbReference>
<dbReference type="GO" id="GO:0044210">
    <property type="term" value="P:'de novo' CTP biosynthetic process"/>
    <property type="evidence" value="ECO:0007669"/>
    <property type="project" value="UniProtKB-UniPathway"/>
</dbReference>
<dbReference type="GO" id="GO:0019856">
    <property type="term" value="P:pyrimidine nucleobase biosynthetic process"/>
    <property type="evidence" value="ECO:0007669"/>
    <property type="project" value="TreeGrafter"/>
</dbReference>
<dbReference type="CDD" id="cd03113">
    <property type="entry name" value="CTPS_N"/>
    <property type="match status" value="1"/>
</dbReference>
<dbReference type="CDD" id="cd01746">
    <property type="entry name" value="GATase1_CTP_Synthase"/>
    <property type="match status" value="1"/>
</dbReference>
<dbReference type="FunFam" id="3.40.50.300:FF:000207">
    <property type="entry name" value="CTP synthase"/>
    <property type="match status" value="1"/>
</dbReference>
<dbReference type="FunFam" id="3.40.50.880:FF:000005">
    <property type="entry name" value="CTP synthase"/>
    <property type="match status" value="1"/>
</dbReference>
<dbReference type="Gene3D" id="3.40.50.880">
    <property type="match status" value="1"/>
</dbReference>
<dbReference type="Gene3D" id="3.40.50.300">
    <property type="entry name" value="P-loop containing nucleotide triphosphate hydrolases"/>
    <property type="match status" value="1"/>
</dbReference>
<dbReference type="InterPro" id="IPR029062">
    <property type="entry name" value="Class_I_gatase-like"/>
</dbReference>
<dbReference type="InterPro" id="IPR004468">
    <property type="entry name" value="CTP_synthase"/>
</dbReference>
<dbReference type="InterPro" id="IPR017456">
    <property type="entry name" value="CTP_synthase_N"/>
</dbReference>
<dbReference type="InterPro" id="IPR017926">
    <property type="entry name" value="GATASE"/>
</dbReference>
<dbReference type="InterPro" id="IPR033828">
    <property type="entry name" value="GATase1_CTP_Synthase"/>
</dbReference>
<dbReference type="InterPro" id="IPR027417">
    <property type="entry name" value="P-loop_NTPase"/>
</dbReference>
<dbReference type="NCBIfam" id="NF003792">
    <property type="entry name" value="PRK05380.1"/>
    <property type="match status" value="1"/>
</dbReference>
<dbReference type="NCBIfam" id="TIGR00337">
    <property type="entry name" value="PyrG"/>
    <property type="match status" value="1"/>
</dbReference>
<dbReference type="PANTHER" id="PTHR11550">
    <property type="entry name" value="CTP SYNTHASE"/>
    <property type="match status" value="1"/>
</dbReference>
<dbReference type="PANTHER" id="PTHR11550:SF0">
    <property type="entry name" value="CTP SYNTHASE-RELATED"/>
    <property type="match status" value="1"/>
</dbReference>
<dbReference type="Pfam" id="PF06418">
    <property type="entry name" value="CTP_synth_N"/>
    <property type="match status" value="1"/>
</dbReference>
<dbReference type="Pfam" id="PF00117">
    <property type="entry name" value="GATase"/>
    <property type="match status" value="1"/>
</dbReference>
<dbReference type="SUPFAM" id="SSF52317">
    <property type="entry name" value="Class I glutamine amidotransferase-like"/>
    <property type="match status" value="1"/>
</dbReference>
<dbReference type="SUPFAM" id="SSF52540">
    <property type="entry name" value="P-loop containing nucleoside triphosphate hydrolases"/>
    <property type="match status" value="1"/>
</dbReference>
<dbReference type="PROSITE" id="PS51273">
    <property type="entry name" value="GATASE_TYPE_1"/>
    <property type="match status" value="1"/>
</dbReference>
<comment type="function">
    <text evidence="1">Catalyzes the ATP-dependent amination of UTP to CTP with either L-glutamine or ammonia as the source of nitrogen. Constitutes the rate-limiting enzyme in the synthesis of cytosine nucleotides (By similarity).</text>
</comment>
<comment type="catalytic activity">
    <reaction>
        <text>UTP + L-glutamine + ATP + H2O = CTP + L-glutamate + ADP + phosphate + 2 H(+)</text>
        <dbReference type="Rhea" id="RHEA:26426"/>
        <dbReference type="ChEBI" id="CHEBI:15377"/>
        <dbReference type="ChEBI" id="CHEBI:15378"/>
        <dbReference type="ChEBI" id="CHEBI:29985"/>
        <dbReference type="ChEBI" id="CHEBI:30616"/>
        <dbReference type="ChEBI" id="CHEBI:37563"/>
        <dbReference type="ChEBI" id="CHEBI:43474"/>
        <dbReference type="ChEBI" id="CHEBI:46398"/>
        <dbReference type="ChEBI" id="CHEBI:58359"/>
        <dbReference type="ChEBI" id="CHEBI:456216"/>
        <dbReference type="EC" id="6.3.4.2"/>
    </reaction>
</comment>
<comment type="pathway">
    <text>Pyrimidine metabolism; CTP biosynthesis via de novo pathway; CTP from UDP: step 2/2.</text>
</comment>
<comment type="similarity">
    <text evidence="4">Belongs to the CTP synthase family.</text>
</comment>
<evidence type="ECO:0000250" key="1"/>
<evidence type="ECO:0000250" key="2">
    <source>
        <dbReference type="UniProtKB" id="Q9VUL1"/>
    </source>
</evidence>
<evidence type="ECO:0000255" key="3">
    <source>
        <dbReference type="PROSITE-ProRule" id="PRU00605"/>
    </source>
</evidence>
<evidence type="ECO:0000305" key="4"/>